<organism>
    <name type="scientific">Trifolium semipilosum</name>
    <name type="common">Kenya clover</name>
    <dbReference type="NCBI Taxonomy" id="74529"/>
    <lineage>
        <taxon>Eukaryota</taxon>
        <taxon>Viridiplantae</taxon>
        <taxon>Streptophyta</taxon>
        <taxon>Embryophyta</taxon>
        <taxon>Tracheophyta</taxon>
        <taxon>Spermatophyta</taxon>
        <taxon>Magnoliopsida</taxon>
        <taxon>eudicotyledons</taxon>
        <taxon>Gunneridae</taxon>
        <taxon>Pentapetalae</taxon>
        <taxon>rosids</taxon>
        <taxon>fabids</taxon>
        <taxon>Fabales</taxon>
        <taxon>Fabaceae</taxon>
        <taxon>Papilionoideae</taxon>
        <taxon>50 kb inversion clade</taxon>
        <taxon>NPAAA clade</taxon>
        <taxon>Hologalegina</taxon>
        <taxon>IRL clade</taxon>
        <taxon>Trifolieae</taxon>
        <taxon>Trifolium</taxon>
    </lineage>
</organism>
<comment type="function">
    <text evidence="1">Usually encoded in the trnK tRNA gene intron. Probably assists in splicing its own and other chloroplast group II introns.</text>
</comment>
<comment type="subcellular location">
    <subcellularLocation>
        <location>Plastid</location>
        <location>Chloroplast</location>
    </subcellularLocation>
</comment>
<comment type="similarity">
    <text evidence="1">Belongs to the intron maturase 2 family. MatK subfamily.</text>
</comment>
<accession>Q8MCM3</accession>
<feature type="chain" id="PRO_0000143753" description="Maturase K">
    <location>
        <begin position="1"/>
        <end position="509"/>
    </location>
</feature>
<name>MATK_TRISM</name>
<gene>
    <name evidence="1" type="primary">matK</name>
</gene>
<reference key="1">
    <citation type="book" date="2003" name="Advances in legume systematics - part 10">
        <title>Phylogenetic analyses of tribes Trifolieae and Vicieae based on sequences of the plastid gene matK (Papilionoideae: Leguminosae).</title>
        <editorList>
            <person name="Klitgaard B.B."/>
            <person name="Bruneau A."/>
        </editorList>
        <authorList>
            <person name="Steele K.P."/>
            <person name="Wojciechowski M.F."/>
        </authorList>
    </citation>
    <scope>NUCLEOTIDE SEQUENCE [GENOMIC DNA]</scope>
</reference>
<proteinExistence type="inferred from homology"/>
<keyword id="KW-0150">Chloroplast</keyword>
<keyword id="KW-0507">mRNA processing</keyword>
<keyword id="KW-0934">Plastid</keyword>
<keyword id="KW-0694">RNA-binding</keyword>
<keyword id="KW-0819">tRNA processing</keyword>
<evidence type="ECO:0000255" key="1">
    <source>
        <dbReference type="HAMAP-Rule" id="MF_01390"/>
    </source>
</evidence>
<dbReference type="EMBL" id="AF522132">
    <property type="protein sequence ID" value="AAM82124.1"/>
    <property type="molecule type" value="Genomic_DNA"/>
</dbReference>
<dbReference type="GO" id="GO:0009507">
    <property type="term" value="C:chloroplast"/>
    <property type="evidence" value="ECO:0007669"/>
    <property type="project" value="UniProtKB-SubCell"/>
</dbReference>
<dbReference type="GO" id="GO:0003723">
    <property type="term" value="F:RNA binding"/>
    <property type="evidence" value="ECO:0007669"/>
    <property type="project" value="UniProtKB-KW"/>
</dbReference>
<dbReference type="GO" id="GO:0006397">
    <property type="term" value="P:mRNA processing"/>
    <property type="evidence" value="ECO:0007669"/>
    <property type="project" value="UniProtKB-KW"/>
</dbReference>
<dbReference type="GO" id="GO:0008380">
    <property type="term" value="P:RNA splicing"/>
    <property type="evidence" value="ECO:0007669"/>
    <property type="project" value="UniProtKB-UniRule"/>
</dbReference>
<dbReference type="GO" id="GO:0008033">
    <property type="term" value="P:tRNA processing"/>
    <property type="evidence" value="ECO:0007669"/>
    <property type="project" value="UniProtKB-KW"/>
</dbReference>
<dbReference type="HAMAP" id="MF_01390">
    <property type="entry name" value="MatK"/>
    <property type="match status" value="1"/>
</dbReference>
<dbReference type="InterPro" id="IPR024937">
    <property type="entry name" value="Domain_X"/>
</dbReference>
<dbReference type="InterPro" id="IPR002866">
    <property type="entry name" value="Maturase_MatK"/>
</dbReference>
<dbReference type="InterPro" id="IPR024942">
    <property type="entry name" value="Maturase_MatK_N"/>
</dbReference>
<dbReference type="PANTHER" id="PTHR34811">
    <property type="entry name" value="MATURASE K"/>
    <property type="match status" value="1"/>
</dbReference>
<dbReference type="PANTHER" id="PTHR34811:SF1">
    <property type="entry name" value="MATURASE K"/>
    <property type="match status" value="1"/>
</dbReference>
<dbReference type="Pfam" id="PF01348">
    <property type="entry name" value="Intron_maturas2"/>
    <property type="match status" value="1"/>
</dbReference>
<dbReference type="Pfam" id="PF01824">
    <property type="entry name" value="MatK_N"/>
    <property type="match status" value="1"/>
</dbReference>
<protein>
    <recommendedName>
        <fullName evidence="1">Maturase K</fullName>
    </recommendedName>
    <alternativeName>
        <fullName evidence="1">Intron maturase</fullName>
    </alternativeName>
</protein>
<geneLocation type="chloroplast"/>
<sequence>MKEYRVYLERARSRQQDFLYPLIFREYIYGLAYSHIDRSIFVENGGYDNKYSLLNVKRLITQMYQQNHLIISTNDSNKNPFLGYNKNFYSQIIAEGFAIVVEIPFFLQLSSSLEEAEIIKSYKNVRSIHSIFPFLEDKFTYLNYVSDIRIPYPIHLEILVQILRYWVKDAPFFHLLRLFLYDFCNWNCFIPTKKSISTFSKSNPRLFLFLYNFYVCEYESIFLFLRNKSSHLRLKSFSVFNERIFFYAKREHLVEVFSKDFSYTLPFFKDPNIHYVRYQGKCILASKNGPFLMNKWKHYFIHLWQCFFDVWSQPRTININQLSEHSIQLLGYFSNVRLNRSVVRSQMLQNTFLIEIVSKKLDIIVPIIPIIRSLAKAKFCNVLGHPISKPVWADSSDFDIIERFLRICSNLCHYYHGSSKKKSLYRIKYILRLSCIKTLACKHKSTVRAFLQTSGSEELLEEFFTEEEEILPWNFQILSLICHSKSFTSHGFHSNRIWYLDILFSNDLE</sequence>